<accession>A8M8F3</accession>
<gene>
    <name evidence="1" type="primary">panC</name>
    <name type="ordered locus">Sare_4718</name>
</gene>
<comment type="function">
    <text evidence="1">Catalyzes the condensation of pantoate with beta-alanine in an ATP-dependent reaction via a pantoyl-adenylate intermediate.</text>
</comment>
<comment type="catalytic activity">
    <reaction evidence="1">
        <text>(R)-pantoate + beta-alanine + ATP = (R)-pantothenate + AMP + diphosphate + H(+)</text>
        <dbReference type="Rhea" id="RHEA:10912"/>
        <dbReference type="ChEBI" id="CHEBI:15378"/>
        <dbReference type="ChEBI" id="CHEBI:15980"/>
        <dbReference type="ChEBI" id="CHEBI:29032"/>
        <dbReference type="ChEBI" id="CHEBI:30616"/>
        <dbReference type="ChEBI" id="CHEBI:33019"/>
        <dbReference type="ChEBI" id="CHEBI:57966"/>
        <dbReference type="ChEBI" id="CHEBI:456215"/>
        <dbReference type="EC" id="6.3.2.1"/>
    </reaction>
</comment>
<comment type="pathway">
    <text evidence="1">Cofactor biosynthesis; (R)-pantothenate biosynthesis; (R)-pantothenate from (R)-pantoate and beta-alanine: step 1/1.</text>
</comment>
<comment type="subunit">
    <text evidence="1">Homodimer.</text>
</comment>
<comment type="subcellular location">
    <subcellularLocation>
        <location evidence="1">Cytoplasm</location>
    </subcellularLocation>
</comment>
<comment type="miscellaneous">
    <text evidence="1">The reaction proceeds by a bi uni uni bi ping pong mechanism.</text>
</comment>
<comment type="similarity">
    <text evidence="1">Belongs to the pantothenate synthetase family.</text>
</comment>
<organism>
    <name type="scientific">Salinispora arenicola (strain CNS-205)</name>
    <dbReference type="NCBI Taxonomy" id="391037"/>
    <lineage>
        <taxon>Bacteria</taxon>
        <taxon>Bacillati</taxon>
        <taxon>Actinomycetota</taxon>
        <taxon>Actinomycetes</taxon>
        <taxon>Micromonosporales</taxon>
        <taxon>Micromonosporaceae</taxon>
        <taxon>Salinispora</taxon>
    </lineage>
</organism>
<dbReference type="EC" id="6.3.2.1" evidence="1"/>
<dbReference type="EMBL" id="CP000850">
    <property type="protein sequence ID" value="ABW00472.1"/>
    <property type="molecule type" value="Genomic_DNA"/>
</dbReference>
<dbReference type="SMR" id="A8M8F3"/>
<dbReference type="STRING" id="391037.Sare_4718"/>
<dbReference type="KEGG" id="saq:Sare_4718"/>
<dbReference type="PATRIC" id="fig|391037.6.peg.4769"/>
<dbReference type="eggNOG" id="COG0414">
    <property type="taxonomic scope" value="Bacteria"/>
</dbReference>
<dbReference type="HOGENOM" id="CLU_047148_0_2_11"/>
<dbReference type="OrthoDB" id="9773087at2"/>
<dbReference type="UniPathway" id="UPA00028">
    <property type="reaction ID" value="UER00005"/>
</dbReference>
<dbReference type="GO" id="GO:0005829">
    <property type="term" value="C:cytosol"/>
    <property type="evidence" value="ECO:0007669"/>
    <property type="project" value="TreeGrafter"/>
</dbReference>
<dbReference type="GO" id="GO:0005524">
    <property type="term" value="F:ATP binding"/>
    <property type="evidence" value="ECO:0007669"/>
    <property type="project" value="UniProtKB-KW"/>
</dbReference>
<dbReference type="GO" id="GO:0004592">
    <property type="term" value="F:pantoate-beta-alanine ligase activity"/>
    <property type="evidence" value="ECO:0007669"/>
    <property type="project" value="UniProtKB-UniRule"/>
</dbReference>
<dbReference type="GO" id="GO:0015940">
    <property type="term" value="P:pantothenate biosynthetic process"/>
    <property type="evidence" value="ECO:0007669"/>
    <property type="project" value="UniProtKB-UniRule"/>
</dbReference>
<dbReference type="CDD" id="cd00560">
    <property type="entry name" value="PanC"/>
    <property type="match status" value="1"/>
</dbReference>
<dbReference type="FunFam" id="3.40.50.620:FF:000114">
    <property type="entry name" value="Pantothenate synthetase"/>
    <property type="match status" value="1"/>
</dbReference>
<dbReference type="Gene3D" id="3.40.50.620">
    <property type="entry name" value="HUPs"/>
    <property type="match status" value="1"/>
</dbReference>
<dbReference type="Gene3D" id="3.30.1300.10">
    <property type="entry name" value="Pantoate-beta-alanine ligase, C-terminal domain"/>
    <property type="match status" value="1"/>
</dbReference>
<dbReference type="HAMAP" id="MF_00158">
    <property type="entry name" value="PanC"/>
    <property type="match status" value="1"/>
</dbReference>
<dbReference type="InterPro" id="IPR003721">
    <property type="entry name" value="Pantoate_ligase"/>
</dbReference>
<dbReference type="InterPro" id="IPR042176">
    <property type="entry name" value="Pantoate_ligase_C"/>
</dbReference>
<dbReference type="InterPro" id="IPR014729">
    <property type="entry name" value="Rossmann-like_a/b/a_fold"/>
</dbReference>
<dbReference type="NCBIfam" id="TIGR00018">
    <property type="entry name" value="panC"/>
    <property type="match status" value="1"/>
</dbReference>
<dbReference type="PANTHER" id="PTHR21299">
    <property type="entry name" value="CYTIDYLATE KINASE/PANTOATE-BETA-ALANINE LIGASE"/>
    <property type="match status" value="1"/>
</dbReference>
<dbReference type="PANTHER" id="PTHR21299:SF1">
    <property type="entry name" value="PANTOATE--BETA-ALANINE LIGASE"/>
    <property type="match status" value="1"/>
</dbReference>
<dbReference type="Pfam" id="PF02569">
    <property type="entry name" value="Pantoate_ligase"/>
    <property type="match status" value="1"/>
</dbReference>
<dbReference type="SUPFAM" id="SSF52374">
    <property type="entry name" value="Nucleotidylyl transferase"/>
    <property type="match status" value="1"/>
</dbReference>
<feature type="chain" id="PRO_1000076864" description="Pantothenate synthetase">
    <location>
        <begin position="1"/>
        <end position="282"/>
    </location>
</feature>
<feature type="active site" description="Proton donor" evidence="1">
    <location>
        <position position="35"/>
    </location>
</feature>
<feature type="binding site" evidence="1">
    <location>
        <begin position="28"/>
        <end position="35"/>
    </location>
    <ligand>
        <name>ATP</name>
        <dbReference type="ChEBI" id="CHEBI:30616"/>
    </ligand>
</feature>
<feature type="binding site" evidence="1">
    <location>
        <position position="59"/>
    </location>
    <ligand>
        <name>(R)-pantoate</name>
        <dbReference type="ChEBI" id="CHEBI:15980"/>
    </ligand>
</feature>
<feature type="binding site" evidence="1">
    <location>
        <position position="59"/>
    </location>
    <ligand>
        <name>beta-alanine</name>
        <dbReference type="ChEBI" id="CHEBI:57966"/>
    </ligand>
</feature>
<feature type="binding site" evidence="1">
    <location>
        <begin position="146"/>
        <end position="149"/>
    </location>
    <ligand>
        <name>ATP</name>
        <dbReference type="ChEBI" id="CHEBI:30616"/>
    </ligand>
</feature>
<feature type="binding site" evidence="1">
    <location>
        <position position="152"/>
    </location>
    <ligand>
        <name>(R)-pantoate</name>
        <dbReference type="ChEBI" id="CHEBI:15980"/>
    </ligand>
</feature>
<feature type="binding site" evidence="1">
    <location>
        <position position="175"/>
    </location>
    <ligand>
        <name>ATP</name>
        <dbReference type="ChEBI" id="CHEBI:30616"/>
    </ligand>
</feature>
<feature type="binding site" evidence="1">
    <location>
        <begin position="183"/>
        <end position="186"/>
    </location>
    <ligand>
        <name>ATP</name>
        <dbReference type="ChEBI" id="CHEBI:30616"/>
    </ligand>
</feature>
<name>PANC_SALAI</name>
<sequence>MTELVHTRAELAAARDGLTGTVGVVMTMGALHSGHETLLRAARERADHVLVTIFVNPLQFGPDEDFNRYPRTLDVDLEICRRAGVAVVFAPVVTELYPEGKPRVWVAPGQLGEELEGQSRPGFFHGVLTVVLKLLHVTRPDLAFFGEKDYQQLTLVRRMVGDLDVPVEIVGVPTVREPDGLALSSRNRYLSPDERAAALSLSGALRAGAAAAAVGADAGAVLAAAHAAFESGPSGARLDYLVLTDSDLEPGPTAGPARMLVAAWVGTTRLIDNMSVQLAPYS</sequence>
<evidence type="ECO:0000255" key="1">
    <source>
        <dbReference type="HAMAP-Rule" id="MF_00158"/>
    </source>
</evidence>
<keyword id="KW-0067">ATP-binding</keyword>
<keyword id="KW-0963">Cytoplasm</keyword>
<keyword id="KW-0436">Ligase</keyword>
<keyword id="KW-0547">Nucleotide-binding</keyword>
<keyword id="KW-0566">Pantothenate biosynthesis</keyword>
<reference key="1">
    <citation type="submission" date="2007-10" db="EMBL/GenBank/DDBJ databases">
        <title>Complete sequence of Salinispora arenicola CNS-205.</title>
        <authorList>
            <consortium name="US DOE Joint Genome Institute"/>
            <person name="Copeland A."/>
            <person name="Lucas S."/>
            <person name="Lapidus A."/>
            <person name="Barry K."/>
            <person name="Glavina del Rio T."/>
            <person name="Dalin E."/>
            <person name="Tice H."/>
            <person name="Pitluck S."/>
            <person name="Foster B."/>
            <person name="Schmutz J."/>
            <person name="Larimer F."/>
            <person name="Land M."/>
            <person name="Hauser L."/>
            <person name="Kyrpides N."/>
            <person name="Ivanova N."/>
            <person name="Jensen P.R."/>
            <person name="Moore B.S."/>
            <person name="Penn K."/>
            <person name="Jenkins C."/>
            <person name="Udwary D."/>
            <person name="Xiang L."/>
            <person name="Gontang E."/>
            <person name="Richardson P."/>
        </authorList>
    </citation>
    <scope>NUCLEOTIDE SEQUENCE [LARGE SCALE GENOMIC DNA]</scope>
    <source>
        <strain>CNS-205</strain>
    </source>
</reference>
<protein>
    <recommendedName>
        <fullName evidence="1">Pantothenate synthetase</fullName>
        <shortName evidence="1">PS</shortName>
        <ecNumber evidence="1">6.3.2.1</ecNumber>
    </recommendedName>
    <alternativeName>
        <fullName evidence="1">Pantoate--beta-alanine ligase</fullName>
    </alternativeName>
    <alternativeName>
        <fullName evidence="1">Pantoate-activating enzyme</fullName>
    </alternativeName>
</protein>
<proteinExistence type="inferred from homology"/>